<protein>
    <recommendedName>
        <fullName evidence="1">Uroporphyrinogen decarboxylase</fullName>
        <shortName evidence="1">UPD</shortName>
        <shortName evidence="1">URO-D</shortName>
        <ecNumber evidence="1">4.1.1.37</ecNumber>
    </recommendedName>
</protein>
<comment type="function">
    <text evidence="1">Catalyzes the decarboxylation of four acetate groups of uroporphyrinogen-III to yield coproporphyrinogen-III.</text>
</comment>
<comment type="catalytic activity">
    <reaction evidence="1">
        <text>uroporphyrinogen III + 4 H(+) = coproporphyrinogen III + 4 CO2</text>
        <dbReference type="Rhea" id="RHEA:19865"/>
        <dbReference type="ChEBI" id="CHEBI:15378"/>
        <dbReference type="ChEBI" id="CHEBI:16526"/>
        <dbReference type="ChEBI" id="CHEBI:57308"/>
        <dbReference type="ChEBI" id="CHEBI:57309"/>
        <dbReference type="EC" id="4.1.1.37"/>
    </reaction>
</comment>
<comment type="pathway">
    <text evidence="1">Porphyrin-containing compound metabolism; protoporphyrin-IX biosynthesis; coproporphyrinogen-III from 5-aminolevulinate: step 4/4.</text>
</comment>
<comment type="subunit">
    <text evidence="1">Homodimer.</text>
</comment>
<comment type="subcellular location">
    <subcellularLocation>
        <location evidence="1">Cytoplasm</location>
    </subcellularLocation>
</comment>
<comment type="similarity">
    <text evidence="1">Belongs to the uroporphyrinogen decarboxylase family.</text>
</comment>
<reference key="1">
    <citation type="journal article" date="2007" name="Science">
        <title>Legumes symbioses: absence of nod genes in photosynthetic bradyrhizobia.</title>
        <authorList>
            <person name="Giraud E."/>
            <person name="Moulin L."/>
            <person name="Vallenet D."/>
            <person name="Barbe V."/>
            <person name="Cytryn E."/>
            <person name="Avarre J.-C."/>
            <person name="Jaubert M."/>
            <person name="Simon D."/>
            <person name="Cartieaux F."/>
            <person name="Prin Y."/>
            <person name="Bena G."/>
            <person name="Hannibal L."/>
            <person name="Fardoux J."/>
            <person name="Kojadinovic M."/>
            <person name="Vuillet L."/>
            <person name="Lajus A."/>
            <person name="Cruveiller S."/>
            <person name="Rouy Z."/>
            <person name="Mangenot S."/>
            <person name="Segurens B."/>
            <person name="Dossat C."/>
            <person name="Franck W.L."/>
            <person name="Chang W.-S."/>
            <person name="Saunders E."/>
            <person name="Bruce D."/>
            <person name="Richardson P."/>
            <person name="Normand P."/>
            <person name="Dreyfus B."/>
            <person name="Pignol D."/>
            <person name="Stacey G."/>
            <person name="Emerich D."/>
            <person name="Vermeglio A."/>
            <person name="Medigue C."/>
            <person name="Sadowsky M."/>
        </authorList>
    </citation>
    <scope>NUCLEOTIDE SEQUENCE [LARGE SCALE GENOMIC DNA]</scope>
    <source>
        <strain>BTAi1 / ATCC BAA-1182</strain>
    </source>
</reference>
<keyword id="KW-0963">Cytoplasm</keyword>
<keyword id="KW-0210">Decarboxylase</keyword>
<keyword id="KW-0456">Lyase</keyword>
<keyword id="KW-0627">Porphyrin biosynthesis</keyword>
<keyword id="KW-1185">Reference proteome</keyword>
<sequence length="343" mass="37176">MNKPFIDVLAGQRQSAPPVWMMRQAGRYLPEYREVRAKAGGFLDLCFNPEMAAEVTLQPIRRFGFDAAIIFSDILVIPHALGRSVRFEVGEGPRLDPLDTPEKIATLAGHADLTKLDAVFEALRRVRAELPKSTALIGFCGAPWTVATYMVAGQGTPDQAPARLLAYAQPEAFSRIIDALVESSIAYLLKQLEAGADALQIFDTWAGVLSPREFARWSAAPTRRIVEGVRNARPDAKIIGFPRGAGALLPGYVAETAVDAVSIDWTAEPSLVRERVQSKVAVQGNLDPLALMTGGAALDQAVDDVLASYAGGRHIFNLGHGILPETPIAHVEQMLKRVRAYKG</sequence>
<accession>A5EDY0</accession>
<organism>
    <name type="scientific">Bradyrhizobium sp. (strain BTAi1 / ATCC BAA-1182)</name>
    <dbReference type="NCBI Taxonomy" id="288000"/>
    <lineage>
        <taxon>Bacteria</taxon>
        <taxon>Pseudomonadati</taxon>
        <taxon>Pseudomonadota</taxon>
        <taxon>Alphaproteobacteria</taxon>
        <taxon>Hyphomicrobiales</taxon>
        <taxon>Nitrobacteraceae</taxon>
        <taxon>Bradyrhizobium</taxon>
    </lineage>
</organism>
<evidence type="ECO:0000255" key="1">
    <source>
        <dbReference type="HAMAP-Rule" id="MF_00218"/>
    </source>
</evidence>
<dbReference type="EC" id="4.1.1.37" evidence="1"/>
<dbReference type="EMBL" id="CP000494">
    <property type="protein sequence ID" value="ABQ34374.1"/>
    <property type="molecule type" value="Genomic_DNA"/>
</dbReference>
<dbReference type="RefSeq" id="WP_012042404.1">
    <property type="nucleotide sequence ID" value="NC_009485.1"/>
</dbReference>
<dbReference type="SMR" id="A5EDY0"/>
<dbReference type="STRING" id="288000.BBta_2192"/>
<dbReference type="KEGG" id="bbt:BBta_2192"/>
<dbReference type="eggNOG" id="COG0407">
    <property type="taxonomic scope" value="Bacteria"/>
</dbReference>
<dbReference type="HOGENOM" id="CLU_040933_0_0_5"/>
<dbReference type="OrthoDB" id="9806656at2"/>
<dbReference type="UniPathway" id="UPA00251">
    <property type="reaction ID" value="UER00321"/>
</dbReference>
<dbReference type="Proteomes" id="UP000000246">
    <property type="component" value="Chromosome"/>
</dbReference>
<dbReference type="GO" id="GO:0005829">
    <property type="term" value="C:cytosol"/>
    <property type="evidence" value="ECO:0007669"/>
    <property type="project" value="TreeGrafter"/>
</dbReference>
<dbReference type="GO" id="GO:0004853">
    <property type="term" value="F:uroporphyrinogen decarboxylase activity"/>
    <property type="evidence" value="ECO:0007669"/>
    <property type="project" value="UniProtKB-UniRule"/>
</dbReference>
<dbReference type="GO" id="GO:0019353">
    <property type="term" value="P:protoporphyrinogen IX biosynthetic process from glutamate"/>
    <property type="evidence" value="ECO:0007669"/>
    <property type="project" value="TreeGrafter"/>
</dbReference>
<dbReference type="CDD" id="cd00717">
    <property type="entry name" value="URO-D"/>
    <property type="match status" value="1"/>
</dbReference>
<dbReference type="FunFam" id="3.20.20.210:FF:000007">
    <property type="entry name" value="Uroporphyrinogen decarboxylase"/>
    <property type="match status" value="1"/>
</dbReference>
<dbReference type="Gene3D" id="3.20.20.210">
    <property type="match status" value="1"/>
</dbReference>
<dbReference type="HAMAP" id="MF_00218">
    <property type="entry name" value="URO_D"/>
    <property type="match status" value="1"/>
</dbReference>
<dbReference type="InterPro" id="IPR038071">
    <property type="entry name" value="UROD/MetE-like_sf"/>
</dbReference>
<dbReference type="InterPro" id="IPR006361">
    <property type="entry name" value="Uroporphyrinogen_deCO2ase_HemE"/>
</dbReference>
<dbReference type="InterPro" id="IPR000257">
    <property type="entry name" value="Uroporphyrinogen_deCOase"/>
</dbReference>
<dbReference type="NCBIfam" id="TIGR01464">
    <property type="entry name" value="hemE"/>
    <property type="match status" value="1"/>
</dbReference>
<dbReference type="PANTHER" id="PTHR21091">
    <property type="entry name" value="METHYLTETRAHYDROFOLATE:HOMOCYSTEINE METHYLTRANSFERASE RELATED"/>
    <property type="match status" value="1"/>
</dbReference>
<dbReference type="PANTHER" id="PTHR21091:SF169">
    <property type="entry name" value="UROPORPHYRINOGEN DECARBOXYLASE"/>
    <property type="match status" value="1"/>
</dbReference>
<dbReference type="Pfam" id="PF01208">
    <property type="entry name" value="URO-D"/>
    <property type="match status" value="1"/>
</dbReference>
<dbReference type="SUPFAM" id="SSF51726">
    <property type="entry name" value="UROD/MetE-like"/>
    <property type="match status" value="1"/>
</dbReference>
<dbReference type="PROSITE" id="PS00906">
    <property type="entry name" value="UROD_1"/>
    <property type="match status" value="1"/>
</dbReference>
<dbReference type="PROSITE" id="PS00907">
    <property type="entry name" value="UROD_2"/>
    <property type="match status" value="1"/>
</dbReference>
<proteinExistence type="inferred from homology"/>
<name>DCUP_BRASB</name>
<gene>
    <name evidence="1" type="primary">hemE</name>
    <name type="ordered locus">BBta_2192</name>
</gene>
<feature type="chain" id="PRO_0000325629" description="Uroporphyrinogen decarboxylase">
    <location>
        <begin position="1"/>
        <end position="343"/>
    </location>
</feature>
<feature type="binding site" evidence="1">
    <location>
        <begin position="23"/>
        <end position="27"/>
    </location>
    <ligand>
        <name>substrate</name>
    </ligand>
</feature>
<feature type="binding site" evidence="1">
    <location>
        <position position="73"/>
    </location>
    <ligand>
        <name>substrate</name>
    </ligand>
</feature>
<feature type="binding site" evidence="1">
    <location>
        <position position="149"/>
    </location>
    <ligand>
        <name>substrate</name>
    </ligand>
</feature>
<feature type="binding site" evidence="1">
    <location>
        <position position="204"/>
    </location>
    <ligand>
        <name>substrate</name>
    </ligand>
</feature>
<feature type="binding site" evidence="1">
    <location>
        <position position="320"/>
    </location>
    <ligand>
        <name>substrate</name>
    </ligand>
</feature>
<feature type="site" description="Transition state stabilizer" evidence="1">
    <location>
        <position position="73"/>
    </location>
</feature>